<protein>
    <recommendedName>
        <fullName evidence="1">Formate--tetrahydrofolate ligase</fullName>
        <ecNumber evidence="1">6.3.4.3</ecNumber>
    </recommendedName>
    <alternativeName>
        <fullName evidence="1">Formyltetrahydrofolate synthetase</fullName>
        <shortName evidence="1">FHS</shortName>
        <shortName evidence="1">FTHFS</shortName>
    </alternativeName>
</protein>
<proteinExistence type="inferred from homology"/>
<keyword id="KW-0067">ATP-binding</keyword>
<keyword id="KW-0436">Ligase</keyword>
<keyword id="KW-0547">Nucleotide-binding</keyword>
<keyword id="KW-0554">One-carbon metabolism</keyword>
<name>FTHS_BACC1</name>
<accession>Q739F4</accession>
<evidence type="ECO:0000255" key="1">
    <source>
        <dbReference type="HAMAP-Rule" id="MF_01543"/>
    </source>
</evidence>
<organism>
    <name type="scientific">Bacillus cereus (strain ATCC 10987 / NRS 248)</name>
    <dbReference type="NCBI Taxonomy" id="222523"/>
    <lineage>
        <taxon>Bacteria</taxon>
        <taxon>Bacillati</taxon>
        <taxon>Bacillota</taxon>
        <taxon>Bacilli</taxon>
        <taxon>Bacillales</taxon>
        <taxon>Bacillaceae</taxon>
        <taxon>Bacillus</taxon>
        <taxon>Bacillus cereus group</taxon>
    </lineage>
</organism>
<feature type="chain" id="PRO_0000199328" description="Formate--tetrahydrofolate ligase">
    <location>
        <begin position="1"/>
        <end position="562"/>
    </location>
</feature>
<feature type="binding site" evidence="1">
    <location>
        <begin position="71"/>
        <end position="78"/>
    </location>
    <ligand>
        <name>ATP</name>
        <dbReference type="ChEBI" id="CHEBI:30616"/>
    </ligand>
</feature>
<reference key="1">
    <citation type="journal article" date="2004" name="Nucleic Acids Res.">
        <title>The genome sequence of Bacillus cereus ATCC 10987 reveals metabolic adaptations and a large plasmid related to Bacillus anthracis pXO1.</title>
        <authorList>
            <person name="Rasko D.A."/>
            <person name="Ravel J."/>
            <person name="Oekstad O.A."/>
            <person name="Helgason E."/>
            <person name="Cer R.Z."/>
            <person name="Jiang L."/>
            <person name="Shores K.A."/>
            <person name="Fouts D.E."/>
            <person name="Tourasse N.J."/>
            <person name="Angiuoli S.V."/>
            <person name="Kolonay J.F."/>
            <person name="Nelson W.C."/>
            <person name="Kolstoe A.-B."/>
            <person name="Fraser C.M."/>
            <person name="Read T.D."/>
        </authorList>
    </citation>
    <scope>NUCLEOTIDE SEQUENCE [LARGE SCALE GENOMIC DNA]</scope>
    <source>
        <strain>ATCC 10987 / NRS 248</strain>
    </source>
</reference>
<sequence>MTTTTTVKSDIEIAQEASMKKIQEIAADLNILEDELEPYGHYKGKLSLDIFKRLQNEKDGKVVLVTAINPTPAGEGKSTVTVGLGQAFNKIGKKTVIALREPSLGPTMGLKGGAAGGGFSQVVPMEDINLHFTGDIHAITTANNALAAFIDNHIQQGNTLGIDTRKIVWKRCVDLNDRALRNVVIGLGGPVQGVPREDGFDITVASEIMAVFCLATDIQDLKARLSRIVVAYNFANQPVTVKDLGVEGALTLLLKDALKPNLVQTLENTPAIIHGGPFANIAHGCNSVIATTMAAKLGDYVITEAGFGADLGAEKFLDIKARAAGIKPEAVVIVATIRALKMHGGVAKDQLKEENVDALAKGMENLQKHVETIQSFGVPFVIAINKFITDTDAEVAYLQEWCNERGYAVSLTEVWEKGGQGGVDLAEKVLKEIEKGENNYAPLYELELPLEEKIRTIAQKVYGAKDIEFAPKARKQLAQYEGEGWSNLPVCMAKTQYSLSDDATKLGRPSDFIVTIRELKPSIGAGFIVALTGTMLTMPGLPKQPAALQMDVNEDGKAVGLF</sequence>
<dbReference type="EC" id="6.3.4.3" evidence="1"/>
<dbReference type="EMBL" id="AE017194">
    <property type="protein sequence ID" value="AAS41108.1"/>
    <property type="molecule type" value="Genomic_DNA"/>
</dbReference>
<dbReference type="SMR" id="Q739F4"/>
<dbReference type="KEGG" id="bca:BCE_2187"/>
<dbReference type="HOGENOM" id="CLU_003601_3_3_9"/>
<dbReference type="UniPathway" id="UPA00193"/>
<dbReference type="Proteomes" id="UP000002527">
    <property type="component" value="Chromosome"/>
</dbReference>
<dbReference type="GO" id="GO:0005524">
    <property type="term" value="F:ATP binding"/>
    <property type="evidence" value="ECO:0007669"/>
    <property type="project" value="UniProtKB-UniRule"/>
</dbReference>
<dbReference type="GO" id="GO:0004329">
    <property type="term" value="F:formate-tetrahydrofolate ligase activity"/>
    <property type="evidence" value="ECO:0007669"/>
    <property type="project" value="UniProtKB-UniRule"/>
</dbReference>
<dbReference type="GO" id="GO:0035999">
    <property type="term" value="P:tetrahydrofolate interconversion"/>
    <property type="evidence" value="ECO:0007669"/>
    <property type="project" value="UniProtKB-UniRule"/>
</dbReference>
<dbReference type="CDD" id="cd00477">
    <property type="entry name" value="FTHFS"/>
    <property type="match status" value="1"/>
</dbReference>
<dbReference type="FunFam" id="3.30.1510.10:FF:000001">
    <property type="entry name" value="Formate--tetrahydrofolate ligase"/>
    <property type="match status" value="1"/>
</dbReference>
<dbReference type="FunFam" id="3.10.410.10:FF:000001">
    <property type="entry name" value="Putative formate--tetrahydrofolate ligase"/>
    <property type="match status" value="1"/>
</dbReference>
<dbReference type="Gene3D" id="3.30.1510.10">
    <property type="entry name" value="Domain 2, N(10)-formyltetrahydrofolate synthetase"/>
    <property type="match status" value="1"/>
</dbReference>
<dbReference type="Gene3D" id="3.10.410.10">
    <property type="entry name" value="Formyltetrahydrofolate synthetase, domain 3"/>
    <property type="match status" value="1"/>
</dbReference>
<dbReference type="Gene3D" id="3.40.50.300">
    <property type="entry name" value="P-loop containing nucleotide triphosphate hydrolases"/>
    <property type="match status" value="1"/>
</dbReference>
<dbReference type="HAMAP" id="MF_01543">
    <property type="entry name" value="FTHFS"/>
    <property type="match status" value="1"/>
</dbReference>
<dbReference type="InterPro" id="IPR000559">
    <property type="entry name" value="Formate_THF_ligase"/>
</dbReference>
<dbReference type="InterPro" id="IPR020628">
    <property type="entry name" value="Formate_THF_ligase_CS"/>
</dbReference>
<dbReference type="InterPro" id="IPR027417">
    <property type="entry name" value="P-loop_NTPase"/>
</dbReference>
<dbReference type="NCBIfam" id="NF010030">
    <property type="entry name" value="PRK13505.1"/>
    <property type="match status" value="1"/>
</dbReference>
<dbReference type="Pfam" id="PF01268">
    <property type="entry name" value="FTHFS"/>
    <property type="match status" value="1"/>
</dbReference>
<dbReference type="SUPFAM" id="SSF52540">
    <property type="entry name" value="P-loop containing nucleoside triphosphate hydrolases"/>
    <property type="match status" value="1"/>
</dbReference>
<dbReference type="PROSITE" id="PS00721">
    <property type="entry name" value="FTHFS_1"/>
    <property type="match status" value="1"/>
</dbReference>
<dbReference type="PROSITE" id="PS00722">
    <property type="entry name" value="FTHFS_2"/>
    <property type="match status" value="1"/>
</dbReference>
<gene>
    <name evidence="1" type="primary">fhs</name>
    <name type="ordered locus">BCE_2187</name>
</gene>
<comment type="catalytic activity">
    <reaction evidence="1">
        <text>(6S)-5,6,7,8-tetrahydrofolate + formate + ATP = (6R)-10-formyltetrahydrofolate + ADP + phosphate</text>
        <dbReference type="Rhea" id="RHEA:20221"/>
        <dbReference type="ChEBI" id="CHEBI:15740"/>
        <dbReference type="ChEBI" id="CHEBI:30616"/>
        <dbReference type="ChEBI" id="CHEBI:43474"/>
        <dbReference type="ChEBI" id="CHEBI:57453"/>
        <dbReference type="ChEBI" id="CHEBI:195366"/>
        <dbReference type="ChEBI" id="CHEBI:456216"/>
        <dbReference type="EC" id="6.3.4.3"/>
    </reaction>
</comment>
<comment type="pathway">
    <text evidence="1">One-carbon metabolism; tetrahydrofolate interconversion.</text>
</comment>
<comment type="similarity">
    <text evidence="1">Belongs to the formate--tetrahydrofolate ligase family.</text>
</comment>